<sequence>MSLELLSQLETKIQATLENIELLKMELDEEKQKNEALLSQQQELTQKNQQLQQDLNSWSDKVNGLVGLLNNEI</sequence>
<gene>
    <name evidence="1" type="primary">zapB</name>
    <name type="ordered locus">Sfri_0412</name>
</gene>
<dbReference type="EMBL" id="CP000447">
    <property type="protein sequence ID" value="ABI70274.1"/>
    <property type="molecule type" value="Genomic_DNA"/>
</dbReference>
<dbReference type="RefSeq" id="WP_011635901.1">
    <property type="nucleotide sequence ID" value="NC_008345.1"/>
</dbReference>
<dbReference type="SMR" id="Q088P1"/>
<dbReference type="STRING" id="318167.Sfri_0412"/>
<dbReference type="KEGG" id="sfr:Sfri_0412"/>
<dbReference type="eggNOG" id="COG3074">
    <property type="taxonomic scope" value="Bacteria"/>
</dbReference>
<dbReference type="HOGENOM" id="CLU_171174_1_0_6"/>
<dbReference type="OrthoDB" id="6554593at2"/>
<dbReference type="Proteomes" id="UP000000684">
    <property type="component" value="Chromosome"/>
</dbReference>
<dbReference type="GO" id="GO:0005737">
    <property type="term" value="C:cytoplasm"/>
    <property type="evidence" value="ECO:0007669"/>
    <property type="project" value="UniProtKB-SubCell"/>
</dbReference>
<dbReference type="GO" id="GO:0000917">
    <property type="term" value="P:division septum assembly"/>
    <property type="evidence" value="ECO:0007669"/>
    <property type="project" value="UniProtKB-KW"/>
</dbReference>
<dbReference type="GO" id="GO:0043093">
    <property type="term" value="P:FtsZ-dependent cytokinesis"/>
    <property type="evidence" value="ECO:0007669"/>
    <property type="project" value="UniProtKB-UniRule"/>
</dbReference>
<dbReference type="Gene3D" id="1.20.5.340">
    <property type="match status" value="1"/>
</dbReference>
<dbReference type="HAMAP" id="MF_01196">
    <property type="entry name" value="ZapB"/>
    <property type="match status" value="1"/>
</dbReference>
<dbReference type="InterPro" id="IPR009252">
    <property type="entry name" value="Cell_div_ZapB"/>
</dbReference>
<dbReference type="Pfam" id="PF06005">
    <property type="entry name" value="ZapB"/>
    <property type="match status" value="1"/>
</dbReference>
<proteinExistence type="inferred from homology"/>
<accession>Q088P1</accession>
<organism>
    <name type="scientific">Shewanella frigidimarina (strain NCIMB 400)</name>
    <dbReference type="NCBI Taxonomy" id="318167"/>
    <lineage>
        <taxon>Bacteria</taxon>
        <taxon>Pseudomonadati</taxon>
        <taxon>Pseudomonadota</taxon>
        <taxon>Gammaproteobacteria</taxon>
        <taxon>Alteromonadales</taxon>
        <taxon>Shewanellaceae</taxon>
        <taxon>Shewanella</taxon>
    </lineage>
</organism>
<reference key="1">
    <citation type="submission" date="2006-08" db="EMBL/GenBank/DDBJ databases">
        <title>Complete sequence of Shewanella frigidimarina NCIMB 400.</title>
        <authorList>
            <consortium name="US DOE Joint Genome Institute"/>
            <person name="Copeland A."/>
            <person name="Lucas S."/>
            <person name="Lapidus A."/>
            <person name="Barry K."/>
            <person name="Detter J.C."/>
            <person name="Glavina del Rio T."/>
            <person name="Hammon N."/>
            <person name="Israni S."/>
            <person name="Dalin E."/>
            <person name="Tice H."/>
            <person name="Pitluck S."/>
            <person name="Fredrickson J.K."/>
            <person name="Kolker E."/>
            <person name="McCuel L.A."/>
            <person name="DiChristina T."/>
            <person name="Nealson K.H."/>
            <person name="Newman D."/>
            <person name="Tiedje J.M."/>
            <person name="Zhou J."/>
            <person name="Romine M.F."/>
            <person name="Culley D.E."/>
            <person name="Serres M."/>
            <person name="Chertkov O."/>
            <person name="Brettin T."/>
            <person name="Bruce D."/>
            <person name="Han C."/>
            <person name="Tapia R."/>
            <person name="Gilna P."/>
            <person name="Schmutz J."/>
            <person name="Larimer F."/>
            <person name="Land M."/>
            <person name="Hauser L."/>
            <person name="Kyrpides N."/>
            <person name="Mikhailova N."/>
            <person name="Richardson P."/>
        </authorList>
    </citation>
    <scope>NUCLEOTIDE SEQUENCE [LARGE SCALE GENOMIC DNA]</scope>
    <source>
        <strain>NCIMB 400</strain>
    </source>
</reference>
<keyword id="KW-0131">Cell cycle</keyword>
<keyword id="KW-0132">Cell division</keyword>
<keyword id="KW-0175">Coiled coil</keyword>
<keyword id="KW-0963">Cytoplasm</keyword>
<keyword id="KW-1185">Reference proteome</keyword>
<keyword id="KW-0717">Septation</keyword>
<comment type="function">
    <text evidence="1">Non-essential, abundant cell division factor that is required for proper Z-ring formation. It is recruited early to the divisome by direct interaction with FtsZ, stimulating Z-ring assembly and thereby promoting cell division earlier in the cell cycle. Its recruitment to the Z-ring requires functional FtsA or ZipA.</text>
</comment>
<comment type="subunit">
    <text evidence="1">Homodimer. The ends of the coiled-coil dimer bind to each other, forming polymers. Interacts with FtsZ.</text>
</comment>
<comment type="subcellular location">
    <subcellularLocation>
        <location>Cytoplasm</location>
    </subcellularLocation>
    <text evidence="1">Localizes to the septum at mid-cell, in a FtsZ-like pattern.</text>
</comment>
<comment type="similarity">
    <text evidence="1">Belongs to the ZapB family.</text>
</comment>
<name>ZAPB_SHEFN</name>
<feature type="chain" id="PRO_0000333925" description="Cell division protein ZapB">
    <location>
        <begin position="1"/>
        <end position="73"/>
    </location>
</feature>
<feature type="coiled-coil region" evidence="1">
    <location>
        <begin position="3"/>
        <end position="66"/>
    </location>
</feature>
<protein>
    <recommendedName>
        <fullName evidence="1">Cell division protein ZapB</fullName>
    </recommendedName>
</protein>
<evidence type="ECO:0000255" key="1">
    <source>
        <dbReference type="HAMAP-Rule" id="MF_01196"/>
    </source>
</evidence>